<keyword id="KW-0963">Cytoplasm</keyword>
<keyword id="KW-0488">Methylation</keyword>
<keyword id="KW-0648">Protein biosynthesis</keyword>
<reference key="1">
    <citation type="journal article" date="2009" name="J. Bacteriol.">
        <title>Genomic sequencing reveals regulatory mutations and recombinational events in the widely used MC4100 lineage of Escherichia coli K-12.</title>
        <authorList>
            <person name="Ferenci T."/>
            <person name="Zhou Z."/>
            <person name="Betteridge T."/>
            <person name="Ren Y."/>
            <person name="Liu Y."/>
            <person name="Feng L."/>
            <person name="Reeves P.R."/>
            <person name="Wang L."/>
        </authorList>
    </citation>
    <scope>NUCLEOTIDE SEQUENCE [LARGE SCALE GENOMIC DNA]</scope>
    <source>
        <strain>K12 / MC4100 / BW2952</strain>
    </source>
</reference>
<dbReference type="EMBL" id="CP001396">
    <property type="protein sequence ID" value="ACR63982.1"/>
    <property type="molecule type" value="Genomic_DNA"/>
</dbReference>
<dbReference type="RefSeq" id="WP_000804726.1">
    <property type="nucleotide sequence ID" value="NC_012759.1"/>
</dbReference>
<dbReference type="SMR" id="C4ZTQ2"/>
<dbReference type="GeneID" id="93775276"/>
<dbReference type="KEGG" id="ebw:BWG_1036"/>
<dbReference type="HOGENOM" id="CLU_036856_0_1_6"/>
<dbReference type="GO" id="GO:0005737">
    <property type="term" value="C:cytoplasm"/>
    <property type="evidence" value="ECO:0007669"/>
    <property type="project" value="UniProtKB-SubCell"/>
</dbReference>
<dbReference type="GO" id="GO:0016149">
    <property type="term" value="F:translation release factor activity, codon specific"/>
    <property type="evidence" value="ECO:0007669"/>
    <property type="project" value="UniProtKB-UniRule"/>
</dbReference>
<dbReference type="FunFam" id="3.30.160.20:FF:000004">
    <property type="entry name" value="Peptide chain release factor 1"/>
    <property type="match status" value="1"/>
</dbReference>
<dbReference type="FunFam" id="3.30.70.1660:FF:000002">
    <property type="entry name" value="Peptide chain release factor 1"/>
    <property type="match status" value="1"/>
</dbReference>
<dbReference type="FunFam" id="3.30.70.1660:FF:000004">
    <property type="entry name" value="Peptide chain release factor 1"/>
    <property type="match status" value="1"/>
</dbReference>
<dbReference type="Gene3D" id="3.30.160.20">
    <property type="match status" value="1"/>
</dbReference>
<dbReference type="Gene3D" id="3.30.70.1660">
    <property type="match status" value="1"/>
</dbReference>
<dbReference type="Gene3D" id="6.10.140.1950">
    <property type="match status" value="1"/>
</dbReference>
<dbReference type="HAMAP" id="MF_00093">
    <property type="entry name" value="Rel_fac_1"/>
    <property type="match status" value="1"/>
</dbReference>
<dbReference type="InterPro" id="IPR005139">
    <property type="entry name" value="PCRF"/>
</dbReference>
<dbReference type="InterPro" id="IPR000352">
    <property type="entry name" value="Pep_chain_release_fac_I"/>
</dbReference>
<dbReference type="InterPro" id="IPR045853">
    <property type="entry name" value="Pep_chain_release_fac_I_sf"/>
</dbReference>
<dbReference type="InterPro" id="IPR050057">
    <property type="entry name" value="Prokaryotic/Mito_RF"/>
</dbReference>
<dbReference type="InterPro" id="IPR004373">
    <property type="entry name" value="RF-1"/>
</dbReference>
<dbReference type="NCBIfam" id="TIGR00019">
    <property type="entry name" value="prfA"/>
    <property type="match status" value="1"/>
</dbReference>
<dbReference type="NCBIfam" id="NF001859">
    <property type="entry name" value="PRK00591.1"/>
    <property type="match status" value="1"/>
</dbReference>
<dbReference type="PANTHER" id="PTHR43804">
    <property type="entry name" value="LD18447P"/>
    <property type="match status" value="1"/>
</dbReference>
<dbReference type="PANTHER" id="PTHR43804:SF7">
    <property type="entry name" value="LD18447P"/>
    <property type="match status" value="1"/>
</dbReference>
<dbReference type="Pfam" id="PF03462">
    <property type="entry name" value="PCRF"/>
    <property type="match status" value="1"/>
</dbReference>
<dbReference type="Pfam" id="PF00472">
    <property type="entry name" value="RF-1"/>
    <property type="match status" value="1"/>
</dbReference>
<dbReference type="SMART" id="SM00937">
    <property type="entry name" value="PCRF"/>
    <property type="match status" value="1"/>
</dbReference>
<dbReference type="SUPFAM" id="SSF75620">
    <property type="entry name" value="Release factor"/>
    <property type="match status" value="1"/>
</dbReference>
<dbReference type="PROSITE" id="PS00745">
    <property type="entry name" value="RF_PROK_I"/>
    <property type="match status" value="1"/>
</dbReference>
<comment type="function">
    <text evidence="1">Peptide chain release factor 1 directs the termination of translation in response to the peptide chain termination codons UAG and UAA.</text>
</comment>
<comment type="subcellular location">
    <subcellularLocation>
        <location evidence="1">Cytoplasm</location>
    </subcellularLocation>
</comment>
<comment type="PTM">
    <text evidence="1">Methylated by PrmC. Methylation increases the termination efficiency of RF1.</text>
</comment>
<comment type="similarity">
    <text evidence="1">Belongs to the prokaryotic/mitochondrial release factor family.</text>
</comment>
<feature type="chain" id="PRO_1000202691" description="Peptide chain release factor 1">
    <location>
        <begin position="1"/>
        <end position="360"/>
    </location>
</feature>
<feature type="region of interest" description="Disordered" evidence="2">
    <location>
        <begin position="284"/>
        <end position="313"/>
    </location>
</feature>
<feature type="modified residue" description="N5-methylglutamine" evidence="1">
    <location>
        <position position="235"/>
    </location>
</feature>
<organism>
    <name type="scientific">Escherichia coli (strain K12 / MC4100 / BW2952)</name>
    <dbReference type="NCBI Taxonomy" id="595496"/>
    <lineage>
        <taxon>Bacteria</taxon>
        <taxon>Pseudomonadati</taxon>
        <taxon>Pseudomonadota</taxon>
        <taxon>Gammaproteobacteria</taxon>
        <taxon>Enterobacterales</taxon>
        <taxon>Enterobacteriaceae</taxon>
        <taxon>Escherichia</taxon>
    </lineage>
</organism>
<protein>
    <recommendedName>
        <fullName evidence="1">Peptide chain release factor 1</fullName>
        <shortName evidence="1">RF-1</shortName>
    </recommendedName>
</protein>
<name>RF1_ECOBW</name>
<proteinExistence type="inferred from homology"/>
<sequence>MKPSIVAKLEALHERHEEVQALLGDAQTIADQERFRALSREYAQLSDVSRCFTDWQQVQEDIETAQMMLDDPEMREMAQDELREAKEKSEQLEQQLQVLLLPKDPDDERNAFLEVRAGTGGDEAALFAGDLFRMYSRYAEARRWRVEIMSASEGEHGGYKEIIAKISGDGVYGRLKFESGGHRVQRVPATESQGRIHTSACTVAVMPELPDAELPDINPADLRIDTFRSSGAGGQHVNTTDSAIRITHLPTGIVVECQDERSQHKNKAKALSVLGARIHAAEMAKRQQAEASTRRNLLGSGDRSDRNRTYNFPQGRVTDHRINLTLYRLDEVMEGKLDMLIEPIIQEHQADQLAALSEQE</sequence>
<gene>
    <name evidence="1" type="primary">prfA</name>
    <name type="ordered locus">BWG_1036</name>
</gene>
<evidence type="ECO:0000255" key="1">
    <source>
        <dbReference type="HAMAP-Rule" id="MF_00093"/>
    </source>
</evidence>
<evidence type="ECO:0000256" key="2">
    <source>
        <dbReference type="SAM" id="MobiDB-lite"/>
    </source>
</evidence>
<accession>C4ZTQ2</accession>